<proteinExistence type="evidence at protein level"/>
<accession>W0FKI0</accession>
<comment type="function">
    <text evidence="3 6">Catalyzes the conversion of drimenol to drimendiol, a precursor of the sesquiterpenoid polygodial (PubMed:28258968). Polygodial has been shown to be an antifeedant for a number of herbivorous insects (Probable).</text>
</comment>
<comment type="catalytic activity">
    <reaction evidence="3">
        <text>(5S,9S,10S)-drim-7-en-11-ol + reduced [NADPH--hemoprotein reductase] + O2 = (5S,10S)-(9R)-7-drimene-11,12-diol + oxidized [NADPH--hemoprotein reductase] + H2O + H(+)</text>
        <dbReference type="Rhea" id="RHEA:55504"/>
        <dbReference type="Rhea" id="RHEA-COMP:11964"/>
        <dbReference type="Rhea" id="RHEA-COMP:11965"/>
        <dbReference type="ChEBI" id="CHEBI:15377"/>
        <dbReference type="ChEBI" id="CHEBI:15378"/>
        <dbReference type="ChEBI" id="CHEBI:15379"/>
        <dbReference type="ChEBI" id="CHEBI:57618"/>
        <dbReference type="ChEBI" id="CHEBI:58210"/>
        <dbReference type="ChEBI" id="CHEBI:61148"/>
        <dbReference type="ChEBI" id="CHEBI:138971"/>
        <dbReference type="EC" id="1.14.14.72"/>
    </reaction>
    <physiologicalReaction direction="left-to-right" evidence="3">
        <dbReference type="Rhea" id="RHEA:55505"/>
    </physiologicalReaction>
</comment>
<comment type="cofactor">
    <cofactor evidence="1">
        <name>heme</name>
        <dbReference type="ChEBI" id="CHEBI:30413"/>
    </cofactor>
</comment>
<comment type="subcellular location">
    <subcellularLocation>
        <location evidence="2">Membrane</location>
        <topology evidence="2">Single-pass membrane protein</topology>
    </subcellularLocation>
</comment>
<comment type="similarity">
    <text evidence="5">Belongs to the cytochrome P450 family.</text>
</comment>
<sequence length="503" mass="56147">MDYLILMICIVVSGLLLYSSRTSKMKLPPGPPGLPIVGNLFDLGSLPHRSLAKLAKLHGPVMCLRMGRLRVVVISSDSAAKEVLQTSDTLFCNRFVYDSLTASQHHTFSMALLPPTALWKSLRKISASQLFTNARMNASQHLRRKQLEDLLSYVESCSRSGTAINIAQAAFNTSVNLLSKTFFSVDLIDPSSSNSVEFKEMVWQIMLESGTPNLADYFPVLRRIDPQGNRRRMKIQFEKILDLFNTMIRQRLDEKGGCFDEINDTLDALLKINQDNSEELDLSVIPHLLLDLFVGGSESTSSTVEWAMALLFSNPEKMKKAKEELETVVGKGIAVKEEDTGRLPYLQAAIKETFRMHPPTPFLIPRKTDSDVDLCGFTVQKGSQVIVNAWAIGRDPSLWENADTFEPERFLGMEIDVKGRNFELIPFGAGRRICPGLPIAMRMLTLMVANLINCFEWRLEGGAAPETLDMSDKIGFTLQRAHPFRVIPTSIIQGCDVSTALNN</sequence>
<evidence type="ECO:0000250" key="1">
    <source>
        <dbReference type="UniProtKB" id="Q96242"/>
    </source>
</evidence>
<evidence type="ECO:0000255" key="2"/>
<evidence type="ECO:0000269" key="3">
    <source>
    </source>
</evidence>
<evidence type="ECO:0000303" key="4">
    <source>
    </source>
</evidence>
<evidence type="ECO:0000305" key="5"/>
<evidence type="ECO:0000305" key="6">
    <source>
    </source>
</evidence>
<organism>
    <name type="scientific">Persicaria hydropiper</name>
    <name type="common">Marshpepper knotweed</name>
    <name type="synonym">Polygonum hydropiper</name>
    <dbReference type="NCBI Taxonomy" id="46901"/>
    <lineage>
        <taxon>Eukaryota</taxon>
        <taxon>Viridiplantae</taxon>
        <taxon>Streptophyta</taxon>
        <taxon>Embryophyta</taxon>
        <taxon>Tracheophyta</taxon>
        <taxon>Spermatophyta</taxon>
        <taxon>Magnoliopsida</taxon>
        <taxon>eudicotyledons</taxon>
        <taxon>Gunneridae</taxon>
        <taxon>Pentapetalae</taxon>
        <taxon>Caryophyllales</taxon>
        <taxon>Polygonaceae</taxon>
        <taxon>Polygonoideae</taxon>
        <taxon>Persicarieae</taxon>
        <taxon>Persicaria</taxon>
    </lineage>
</organism>
<gene>
    <name evidence="4" type="primary">CYP76AJ1</name>
</gene>
<reference key="1">
    <citation type="journal article" date="2017" name="Plant J.">
        <title>Identification of a drimenol synthase and drimenol oxidase from Persicaria hydropiper, involved in the biosynthesis of insect deterrent drimanes.</title>
        <authorList>
            <person name="Henquet M.G.L."/>
            <person name="Prota N."/>
            <person name="van der Hooft J.J.J."/>
            <person name="Varbanova-Herde M."/>
            <person name="Hulzink R.J.M."/>
            <person name="de Vos M."/>
            <person name="Prins M."/>
            <person name="de Both M.T.J."/>
            <person name="Franssen M.C.R."/>
            <person name="Bouwmeester H."/>
            <person name="Jongsma M."/>
        </authorList>
    </citation>
    <scope>NUCLEOTIDE SEQUENCE [MRNA]</scope>
    <scope>FUNCTION</scope>
    <scope>CATALYTIC ACTIVITY</scope>
</reference>
<dbReference type="EC" id="1.14.14.72" evidence="3"/>
<dbReference type="EMBL" id="KC754969">
    <property type="protein sequence ID" value="AHF22835.1"/>
    <property type="molecule type" value="mRNA"/>
</dbReference>
<dbReference type="SMR" id="W0FKI0"/>
<dbReference type="KEGG" id="ag:AHF22835"/>
<dbReference type="BRENDA" id="1.14.14.72">
    <property type="organism ID" value="13328"/>
</dbReference>
<dbReference type="GO" id="GO:0016020">
    <property type="term" value="C:membrane"/>
    <property type="evidence" value="ECO:0007669"/>
    <property type="project" value="UniProtKB-SubCell"/>
</dbReference>
<dbReference type="GO" id="GO:0020037">
    <property type="term" value="F:heme binding"/>
    <property type="evidence" value="ECO:0007669"/>
    <property type="project" value="InterPro"/>
</dbReference>
<dbReference type="GO" id="GO:0005506">
    <property type="term" value="F:iron ion binding"/>
    <property type="evidence" value="ECO:0007669"/>
    <property type="project" value="InterPro"/>
</dbReference>
<dbReference type="GO" id="GO:0004497">
    <property type="term" value="F:monooxygenase activity"/>
    <property type="evidence" value="ECO:0007669"/>
    <property type="project" value="UniProtKB-KW"/>
</dbReference>
<dbReference type="GO" id="GO:0016705">
    <property type="term" value="F:oxidoreductase activity, acting on paired donors, with incorporation or reduction of molecular oxygen"/>
    <property type="evidence" value="ECO:0007669"/>
    <property type="project" value="InterPro"/>
</dbReference>
<dbReference type="CDD" id="cd11073">
    <property type="entry name" value="CYP76-like"/>
    <property type="match status" value="1"/>
</dbReference>
<dbReference type="FunFam" id="1.10.630.10:FF:000007">
    <property type="entry name" value="Cytochrome P450 76C4"/>
    <property type="match status" value="1"/>
</dbReference>
<dbReference type="Gene3D" id="1.10.630.10">
    <property type="entry name" value="Cytochrome P450"/>
    <property type="match status" value="1"/>
</dbReference>
<dbReference type="InterPro" id="IPR001128">
    <property type="entry name" value="Cyt_P450"/>
</dbReference>
<dbReference type="InterPro" id="IPR017972">
    <property type="entry name" value="Cyt_P450_CS"/>
</dbReference>
<dbReference type="InterPro" id="IPR002401">
    <property type="entry name" value="Cyt_P450_E_grp-I"/>
</dbReference>
<dbReference type="InterPro" id="IPR036396">
    <property type="entry name" value="Cyt_P450_sf"/>
</dbReference>
<dbReference type="PANTHER" id="PTHR47950">
    <property type="entry name" value="CYTOCHROME P450, FAMILY 76, SUBFAMILY C, POLYPEPTIDE 5-RELATED"/>
    <property type="match status" value="1"/>
</dbReference>
<dbReference type="PANTHER" id="PTHR47950:SF4">
    <property type="entry name" value="GERANIOL 8-HYDROXYLASE-LIKE"/>
    <property type="match status" value="1"/>
</dbReference>
<dbReference type="Pfam" id="PF00067">
    <property type="entry name" value="p450"/>
    <property type="match status" value="1"/>
</dbReference>
<dbReference type="PRINTS" id="PR00463">
    <property type="entry name" value="EP450I"/>
</dbReference>
<dbReference type="PRINTS" id="PR00385">
    <property type="entry name" value="P450"/>
</dbReference>
<dbReference type="SUPFAM" id="SSF48264">
    <property type="entry name" value="Cytochrome P450"/>
    <property type="match status" value="1"/>
</dbReference>
<dbReference type="PROSITE" id="PS00086">
    <property type="entry name" value="CYTOCHROME_P450"/>
    <property type="match status" value="1"/>
</dbReference>
<keyword id="KW-0349">Heme</keyword>
<keyword id="KW-0408">Iron</keyword>
<keyword id="KW-0472">Membrane</keyword>
<keyword id="KW-0479">Metal-binding</keyword>
<keyword id="KW-0503">Monooxygenase</keyword>
<keyword id="KW-0560">Oxidoreductase</keyword>
<keyword id="KW-0812">Transmembrane</keyword>
<keyword id="KW-1133">Transmembrane helix</keyword>
<name>DOX1_PERHD</name>
<protein>
    <recommendedName>
        <fullName evidence="5">Drimenol monooxygenase</fullName>
        <ecNumber evidence="3">1.14.14.72</ecNumber>
    </recommendedName>
    <alternativeName>
        <fullName evidence="4">Cytochrome P450 76AJ1</fullName>
    </alternativeName>
    <alternativeName>
        <fullName evidence="4">Drimenol oxidase 1</fullName>
        <shortName evidence="4">PhDOX1</shortName>
    </alternativeName>
</protein>
<feature type="chain" id="PRO_0000449921" description="Drimenol monooxygenase">
    <location>
        <begin position="1"/>
        <end position="503"/>
    </location>
</feature>
<feature type="transmembrane region" description="Helical" evidence="2">
    <location>
        <begin position="7"/>
        <end position="23"/>
    </location>
</feature>
<feature type="binding site" description="axial binding residue" evidence="1">
    <location>
        <position position="471"/>
    </location>
    <ligand>
        <name>heme</name>
        <dbReference type="ChEBI" id="CHEBI:30413"/>
    </ligand>
    <ligandPart>
        <name>Fe</name>
        <dbReference type="ChEBI" id="CHEBI:18248"/>
    </ligandPart>
</feature>